<name>SURA_XANCP</name>
<keyword id="KW-0143">Chaperone</keyword>
<keyword id="KW-0413">Isomerase</keyword>
<keyword id="KW-0574">Periplasm</keyword>
<keyword id="KW-1185">Reference proteome</keyword>
<keyword id="KW-0677">Repeat</keyword>
<keyword id="KW-0697">Rotamase</keyword>
<keyword id="KW-0732">Signal</keyword>
<sequence>MTKPFSVLLASLLVITSTVSPLASAQQSQPLDRIAAIVDEDVVLQSELDRAVRNVKSQYAGRDNQLPPDDVLQRQVLERLVLVKLQVGRAEGSGIRVSDEELNRAIASIAQQNGTSVDGLRQKLAADGMGYADFRASVRDEIIVQRLRQSFAQSRISVSEGEVDTALAQQATTGSQYHLAHILVGLPEGATAEQIATGQKKVDGVKALIDKGELDFSAAAVRYSDSPNALEGGDLGWRSLDEIPNAFAQLIRDMQPGQVAGPLRGPSGFQLLKLVEMRDANAGGEKKVLTEYNARHILVRIGDNQTEAQAKAKIDTLRARIVGGADFQATAKESSEDTNSRGQGGDLGWFPADAFGPDFGKQVEGLTDGAVSEPFRTQAGWHIVQRVGTRQTDVSAENQRAQIRETIGRRKLEEEYNRYLQELRGEAFVSFRTGDRADADATAAPEPAAAPAAPTPPPAQPTR</sequence>
<dbReference type="EC" id="5.2.1.8" evidence="1"/>
<dbReference type="EMBL" id="AE008922">
    <property type="protein sequence ID" value="AAM40108.1"/>
    <property type="molecule type" value="Genomic_DNA"/>
</dbReference>
<dbReference type="RefSeq" id="NP_636184.1">
    <property type="nucleotide sequence ID" value="NC_003902.1"/>
</dbReference>
<dbReference type="RefSeq" id="WP_011036029.1">
    <property type="nucleotide sequence ID" value="NC_003902.1"/>
</dbReference>
<dbReference type="SMR" id="Q8PCE1"/>
<dbReference type="STRING" id="190485.XCC0793"/>
<dbReference type="EnsemblBacteria" id="AAM40108">
    <property type="protein sequence ID" value="AAM40108"/>
    <property type="gene ID" value="XCC0793"/>
</dbReference>
<dbReference type="KEGG" id="xcc:XCC0793"/>
<dbReference type="PATRIC" id="fig|190485.4.peg.863"/>
<dbReference type="eggNOG" id="COG0760">
    <property type="taxonomic scope" value="Bacteria"/>
</dbReference>
<dbReference type="HOGENOM" id="CLU_034646_11_0_6"/>
<dbReference type="OrthoDB" id="14196at2"/>
<dbReference type="Proteomes" id="UP000001010">
    <property type="component" value="Chromosome"/>
</dbReference>
<dbReference type="GO" id="GO:0030288">
    <property type="term" value="C:outer membrane-bounded periplasmic space"/>
    <property type="evidence" value="ECO:0000318"/>
    <property type="project" value="GO_Central"/>
</dbReference>
<dbReference type="GO" id="GO:0042277">
    <property type="term" value="F:peptide binding"/>
    <property type="evidence" value="ECO:0007669"/>
    <property type="project" value="InterPro"/>
</dbReference>
<dbReference type="GO" id="GO:0003755">
    <property type="term" value="F:peptidyl-prolyl cis-trans isomerase activity"/>
    <property type="evidence" value="ECO:0000318"/>
    <property type="project" value="GO_Central"/>
</dbReference>
<dbReference type="GO" id="GO:0051082">
    <property type="term" value="F:unfolded protein binding"/>
    <property type="evidence" value="ECO:0000318"/>
    <property type="project" value="GO_Central"/>
</dbReference>
<dbReference type="GO" id="GO:0061077">
    <property type="term" value="P:chaperone-mediated protein folding"/>
    <property type="evidence" value="ECO:0000318"/>
    <property type="project" value="GO_Central"/>
</dbReference>
<dbReference type="GO" id="GO:0043165">
    <property type="term" value="P:Gram-negative-bacterium-type cell outer membrane assembly"/>
    <property type="evidence" value="ECO:0007669"/>
    <property type="project" value="InterPro"/>
</dbReference>
<dbReference type="GO" id="GO:0050821">
    <property type="term" value="P:protein stabilization"/>
    <property type="evidence" value="ECO:0007669"/>
    <property type="project" value="InterPro"/>
</dbReference>
<dbReference type="Gene3D" id="3.10.50.40">
    <property type="match status" value="2"/>
</dbReference>
<dbReference type="Gene3D" id="1.10.4030.10">
    <property type="entry name" value="Porin chaperone SurA, peptide-binding domain"/>
    <property type="match status" value="1"/>
</dbReference>
<dbReference type="HAMAP" id="MF_01183">
    <property type="entry name" value="Chaperone_SurA"/>
    <property type="match status" value="1"/>
</dbReference>
<dbReference type="InterPro" id="IPR050280">
    <property type="entry name" value="OMP_Chaperone_SurA"/>
</dbReference>
<dbReference type="InterPro" id="IPR046357">
    <property type="entry name" value="PPIase_dom_sf"/>
</dbReference>
<dbReference type="InterPro" id="IPR000297">
    <property type="entry name" value="PPIase_PpiC"/>
</dbReference>
<dbReference type="InterPro" id="IPR023034">
    <property type="entry name" value="PPIase_SurA"/>
</dbReference>
<dbReference type="InterPro" id="IPR015391">
    <property type="entry name" value="SurA_N"/>
</dbReference>
<dbReference type="InterPro" id="IPR027304">
    <property type="entry name" value="Trigger_fact/SurA_dom_sf"/>
</dbReference>
<dbReference type="PANTHER" id="PTHR47637">
    <property type="entry name" value="CHAPERONE SURA"/>
    <property type="match status" value="1"/>
</dbReference>
<dbReference type="PANTHER" id="PTHR47637:SF1">
    <property type="entry name" value="CHAPERONE SURA"/>
    <property type="match status" value="1"/>
</dbReference>
<dbReference type="Pfam" id="PF00639">
    <property type="entry name" value="Rotamase"/>
    <property type="match status" value="1"/>
</dbReference>
<dbReference type="Pfam" id="PF13616">
    <property type="entry name" value="Rotamase_3"/>
    <property type="match status" value="1"/>
</dbReference>
<dbReference type="Pfam" id="PF09312">
    <property type="entry name" value="SurA_N"/>
    <property type="match status" value="1"/>
</dbReference>
<dbReference type="SUPFAM" id="SSF54534">
    <property type="entry name" value="FKBP-like"/>
    <property type="match status" value="2"/>
</dbReference>
<dbReference type="SUPFAM" id="SSF109998">
    <property type="entry name" value="Triger factor/SurA peptide-binding domain-like"/>
    <property type="match status" value="1"/>
</dbReference>
<dbReference type="PROSITE" id="PS50198">
    <property type="entry name" value="PPIC_PPIASE_2"/>
    <property type="match status" value="2"/>
</dbReference>
<accession>Q8PCE1</accession>
<comment type="function">
    <text evidence="1">Chaperone involved in the correct folding and assembly of outer membrane proteins. Recognizes specific patterns of aromatic residues and the orientation of their side chains, which are found more frequently in integral outer membrane proteins. May act in both early periplasmic and late outer membrane-associated steps of protein maturation.</text>
</comment>
<comment type="catalytic activity">
    <reaction evidence="1">
        <text>[protein]-peptidylproline (omega=180) = [protein]-peptidylproline (omega=0)</text>
        <dbReference type="Rhea" id="RHEA:16237"/>
        <dbReference type="Rhea" id="RHEA-COMP:10747"/>
        <dbReference type="Rhea" id="RHEA-COMP:10748"/>
        <dbReference type="ChEBI" id="CHEBI:83833"/>
        <dbReference type="ChEBI" id="CHEBI:83834"/>
        <dbReference type="EC" id="5.2.1.8"/>
    </reaction>
</comment>
<comment type="subcellular location">
    <subcellularLocation>
        <location evidence="1">Periplasm</location>
    </subcellularLocation>
    <text evidence="1">Is capable of associating with the outer membrane.</text>
</comment>
<comment type="domain">
    <text evidence="1">The PPIase activity resides only in the second parvulin domain. The N-terminal region and the C-terminal tail are necessary and sufficient for the chaperone activity of SurA. The PPIase activity is dispensable for SurA to function as a chaperone. The N-terminal region and the C-terminal tail are also required for porin recognition.</text>
</comment>
<gene>
    <name evidence="1" type="primary">surA</name>
    <name type="ordered locus">XCC0793</name>
</gene>
<reference key="1">
    <citation type="journal article" date="2002" name="Nature">
        <title>Comparison of the genomes of two Xanthomonas pathogens with differing host specificities.</title>
        <authorList>
            <person name="da Silva A.C.R."/>
            <person name="Ferro J.A."/>
            <person name="Reinach F.C."/>
            <person name="Farah C.S."/>
            <person name="Furlan L.R."/>
            <person name="Quaggio R.B."/>
            <person name="Monteiro-Vitorello C.B."/>
            <person name="Van Sluys M.A."/>
            <person name="Almeida N.F. Jr."/>
            <person name="Alves L.M.C."/>
            <person name="do Amaral A.M."/>
            <person name="Bertolini M.C."/>
            <person name="Camargo L.E.A."/>
            <person name="Camarotte G."/>
            <person name="Cannavan F."/>
            <person name="Cardozo J."/>
            <person name="Chambergo F."/>
            <person name="Ciapina L.P."/>
            <person name="Cicarelli R.M.B."/>
            <person name="Coutinho L.L."/>
            <person name="Cursino-Santos J.R."/>
            <person name="El-Dorry H."/>
            <person name="Faria J.B."/>
            <person name="Ferreira A.J.S."/>
            <person name="Ferreira R.C.C."/>
            <person name="Ferro M.I.T."/>
            <person name="Formighieri E.F."/>
            <person name="Franco M.C."/>
            <person name="Greggio C.C."/>
            <person name="Gruber A."/>
            <person name="Katsuyama A.M."/>
            <person name="Kishi L.T."/>
            <person name="Leite R.P."/>
            <person name="Lemos E.G.M."/>
            <person name="Lemos M.V.F."/>
            <person name="Locali E.C."/>
            <person name="Machado M.A."/>
            <person name="Madeira A.M.B.N."/>
            <person name="Martinez-Rossi N.M."/>
            <person name="Martins E.C."/>
            <person name="Meidanis J."/>
            <person name="Menck C.F.M."/>
            <person name="Miyaki C.Y."/>
            <person name="Moon D.H."/>
            <person name="Moreira L.M."/>
            <person name="Novo M.T.M."/>
            <person name="Okura V.K."/>
            <person name="Oliveira M.C."/>
            <person name="Oliveira V.R."/>
            <person name="Pereira H.A."/>
            <person name="Rossi A."/>
            <person name="Sena J.A.D."/>
            <person name="Silva C."/>
            <person name="de Souza R.F."/>
            <person name="Spinola L.A.F."/>
            <person name="Takita M.A."/>
            <person name="Tamura R.E."/>
            <person name="Teixeira E.C."/>
            <person name="Tezza R.I.D."/>
            <person name="Trindade dos Santos M."/>
            <person name="Truffi D."/>
            <person name="Tsai S.M."/>
            <person name="White F.F."/>
            <person name="Setubal J.C."/>
            <person name="Kitajima J.P."/>
        </authorList>
    </citation>
    <scope>NUCLEOTIDE SEQUENCE [LARGE SCALE GENOMIC DNA]</scope>
    <source>
        <strain>ATCC 33913 / DSM 3586 / NCPPB 528 / LMG 568 / P 25</strain>
    </source>
</reference>
<protein>
    <recommendedName>
        <fullName evidence="1">Chaperone SurA</fullName>
    </recommendedName>
    <alternativeName>
        <fullName evidence="1">Peptidyl-prolyl cis-trans isomerase SurA</fullName>
        <shortName evidence="1">PPIase SurA</shortName>
        <ecNumber evidence="1">5.2.1.8</ecNumber>
    </alternativeName>
    <alternativeName>
        <fullName evidence="1">Rotamase SurA</fullName>
    </alternativeName>
</protein>
<evidence type="ECO:0000255" key="1">
    <source>
        <dbReference type="HAMAP-Rule" id="MF_01183"/>
    </source>
</evidence>
<evidence type="ECO:0000256" key="2">
    <source>
        <dbReference type="SAM" id="MobiDB-lite"/>
    </source>
</evidence>
<proteinExistence type="inferred from homology"/>
<feature type="signal peptide" evidence="1">
    <location>
        <begin position="1"/>
        <end position="25"/>
    </location>
</feature>
<feature type="chain" id="PRO_0000270049" description="Chaperone SurA">
    <location>
        <begin position="26"/>
        <end position="463"/>
    </location>
</feature>
<feature type="domain" description="PpiC 1" evidence="1">
    <location>
        <begin position="174"/>
        <end position="276"/>
    </location>
</feature>
<feature type="domain" description="PpiC 2" evidence="1">
    <location>
        <begin position="289"/>
        <end position="388"/>
    </location>
</feature>
<feature type="region of interest" description="Disordered" evidence="2">
    <location>
        <begin position="329"/>
        <end position="348"/>
    </location>
</feature>
<feature type="region of interest" description="Disordered" evidence="2">
    <location>
        <begin position="434"/>
        <end position="463"/>
    </location>
</feature>
<feature type="compositionally biased region" description="Low complexity" evidence="2">
    <location>
        <begin position="440"/>
        <end position="452"/>
    </location>
</feature>
<feature type="compositionally biased region" description="Pro residues" evidence="2">
    <location>
        <begin position="453"/>
        <end position="463"/>
    </location>
</feature>
<organism>
    <name type="scientific">Xanthomonas campestris pv. campestris (strain ATCC 33913 / DSM 3586 / NCPPB 528 / LMG 568 / P 25)</name>
    <dbReference type="NCBI Taxonomy" id="190485"/>
    <lineage>
        <taxon>Bacteria</taxon>
        <taxon>Pseudomonadati</taxon>
        <taxon>Pseudomonadota</taxon>
        <taxon>Gammaproteobacteria</taxon>
        <taxon>Lysobacterales</taxon>
        <taxon>Lysobacteraceae</taxon>
        <taxon>Xanthomonas</taxon>
    </lineage>
</organism>